<sequence>MNPNMKMWMSWAACAFLLFVCLGTLTEGYPTKPDNPGEDAPAEELAKYYSALRHYINLITRQRYGKRSSADTLISDLLIGETESRPQTRYEDHLAW</sequence>
<comment type="function">
    <text>NPY is implicated in the control of feeding and in secretion of gonadotrophin-release hormone.</text>
</comment>
<comment type="subcellular location">
    <subcellularLocation>
        <location>Secreted</location>
    </subcellularLocation>
</comment>
<comment type="similarity">
    <text evidence="2">Belongs to the NPY family.</text>
</comment>
<gene>
    <name type="primary">npy</name>
</gene>
<accession>Q9I8P3</accession>
<feature type="signal peptide" evidence="1">
    <location>
        <begin position="1"/>
        <end position="28"/>
    </location>
</feature>
<feature type="peptide" id="PRO_0000025335" description="Neuropeptide Y">
    <location>
        <begin position="29"/>
        <end position="64"/>
    </location>
</feature>
<feature type="peptide" id="PRO_0000025336" description="C-flanking peptide of NPY">
    <location>
        <begin position="68"/>
        <end position="96"/>
    </location>
</feature>
<feature type="modified residue" description="Tyrosine amide" evidence="1">
    <location>
        <position position="64"/>
    </location>
</feature>
<reference key="1">
    <citation type="journal article" date="2000" name="J. Neurochem.">
        <title>Zebrafish genes for neuropeptide Y and peptide YY reveal origin by chromosome duplication from an ancestral gene linked to the homeobox cluster.</title>
        <authorList>
            <person name="Soederberg C."/>
            <person name="Wraith A."/>
            <person name="Ringvall M."/>
            <person name="Yan Y.-L."/>
            <person name="Postlethwait J.H."/>
            <person name="Brodin L."/>
            <person name="Larhammar D."/>
        </authorList>
    </citation>
    <scope>NUCLEOTIDE SEQUENCE [GENOMIC DNA]</scope>
</reference>
<proteinExistence type="inferred from homology"/>
<keyword id="KW-0027">Amidation</keyword>
<keyword id="KW-0165">Cleavage on pair of basic residues</keyword>
<keyword id="KW-0527">Neuropeptide</keyword>
<keyword id="KW-1185">Reference proteome</keyword>
<keyword id="KW-0964">Secreted</keyword>
<keyword id="KW-0732">Signal</keyword>
<evidence type="ECO:0000250" key="1"/>
<evidence type="ECO:0000305" key="2"/>
<organism>
    <name type="scientific">Danio rerio</name>
    <name type="common">Zebrafish</name>
    <name type="synonym">Brachydanio rerio</name>
    <dbReference type="NCBI Taxonomy" id="7955"/>
    <lineage>
        <taxon>Eukaryota</taxon>
        <taxon>Metazoa</taxon>
        <taxon>Chordata</taxon>
        <taxon>Craniata</taxon>
        <taxon>Vertebrata</taxon>
        <taxon>Euteleostomi</taxon>
        <taxon>Actinopterygii</taxon>
        <taxon>Neopterygii</taxon>
        <taxon>Teleostei</taxon>
        <taxon>Ostariophysi</taxon>
        <taxon>Cypriniformes</taxon>
        <taxon>Danionidae</taxon>
        <taxon>Danioninae</taxon>
        <taxon>Danio</taxon>
    </lineage>
</organism>
<dbReference type="EMBL" id="AF233874">
    <property type="protein sequence ID" value="AAF79941.1"/>
    <property type="molecule type" value="Genomic_DNA"/>
</dbReference>
<dbReference type="RefSeq" id="NP_571149.1">
    <property type="nucleotide sequence ID" value="NM_131074.2"/>
</dbReference>
<dbReference type="FunCoup" id="Q9I8P3">
    <property type="interactions" value="2056"/>
</dbReference>
<dbReference type="STRING" id="7955.ENSDARP00000052619"/>
<dbReference type="PaxDb" id="7955-ENSDARP00000052619"/>
<dbReference type="Ensembl" id="ENSDART00000052620">
    <property type="protein sequence ID" value="ENSDARP00000052619"/>
    <property type="gene ID" value="ENSDARG00000036222"/>
</dbReference>
<dbReference type="Ensembl" id="ENSDART00000188813">
    <property type="protein sequence ID" value="ENSDARP00000157094"/>
    <property type="gene ID" value="ENSDARG00000036222"/>
</dbReference>
<dbReference type="GeneID" id="30281"/>
<dbReference type="KEGG" id="dre:30281"/>
<dbReference type="AGR" id="ZFIN:ZDB-GENE-980526-438"/>
<dbReference type="CTD" id="4852"/>
<dbReference type="ZFIN" id="ZDB-GENE-980526-438">
    <property type="gene designation" value="npy"/>
</dbReference>
<dbReference type="eggNOG" id="ENOG502S2BU">
    <property type="taxonomic scope" value="Eukaryota"/>
</dbReference>
<dbReference type="HOGENOM" id="CLU_162379_1_0_1"/>
<dbReference type="InParanoid" id="Q9I8P3"/>
<dbReference type="OMA" id="YDDPLMW"/>
<dbReference type="OrthoDB" id="9852947at2759"/>
<dbReference type="PhylomeDB" id="Q9I8P3"/>
<dbReference type="TreeFam" id="TF332778"/>
<dbReference type="Reactome" id="R-DRE-375276">
    <property type="pathway name" value="Peptide ligand-binding receptors"/>
</dbReference>
<dbReference type="Reactome" id="R-DRE-418594">
    <property type="pathway name" value="G alpha (i) signalling events"/>
</dbReference>
<dbReference type="PRO" id="PR:Q9I8P3"/>
<dbReference type="Proteomes" id="UP000000437">
    <property type="component" value="Chromosome 19"/>
</dbReference>
<dbReference type="Bgee" id="ENSDARG00000036222">
    <property type="expression patterns" value="Expressed in brain and 17 other cell types or tissues"/>
</dbReference>
<dbReference type="ExpressionAtlas" id="Q9I8P3">
    <property type="expression patterns" value="baseline and differential"/>
</dbReference>
<dbReference type="GO" id="GO:0005615">
    <property type="term" value="C:extracellular space"/>
    <property type="evidence" value="ECO:0000318"/>
    <property type="project" value="GO_Central"/>
</dbReference>
<dbReference type="GO" id="GO:0005184">
    <property type="term" value="F:neuropeptide hormone activity"/>
    <property type="evidence" value="ECO:0000318"/>
    <property type="project" value="GO_Central"/>
</dbReference>
<dbReference type="GO" id="GO:0031841">
    <property type="term" value="F:neuropeptide Y receptor binding"/>
    <property type="evidence" value="ECO:0000314"/>
    <property type="project" value="ZFIN"/>
</dbReference>
<dbReference type="GO" id="GO:0031843">
    <property type="term" value="F:type 2 neuropeptide Y receptor binding"/>
    <property type="evidence" value="ECO:0000314"/>
    <property type="project" value="ZFIN"/>
</dbReference>
<dbReference type="GO" id="GO:0007631">
    <property type="term" value="P:feeding behavior"/>
    <property type="evidence" value="ECO:0000318"/>
    <property type="project" value="GO_Central"/>
</dbReference>
<dbReference type="GO" id="GO:0071878">
    <property type="term" value="P:negative regulation of adenylate cyclase-activating adrenergic receptor signaling pathway"/>
    <property type="evidence" value="ECO:0000315"/>
    <property type="project" value="ZFIN"/>
</dbReference>
<dbReference type="GO" id="GO:0007218">
    <property type="term" value="P:neuropeptide signaling pathway"/>
    <property type="evidence" value="ECO:0000318"/>
    <property type="project" value="GO_Central"/>
</dbReference>
<dbReference type="GO" id="GO:0045938">
    <property type="term" value="P:positive regulation of circadian sleep/wake cycle, sleep"/>
    <property type="evidence" value="ECO:0000315"/>
    <property type="project" value="ZFIN"/>
</dbReference>
<dbReference type="GO" id="GO:2000253">
    <property type="term" value="P:positive regulation of feeding behavior"/>
    <property type="evidence" value="ECO:0000315"/>
    <property type="project" value="ZFIN"/>
</dbReference>
<dbReference type="CDD" id="cd00126">
    <property type="entry name" value="PAH"/>
    <property type="match status" value="1"/>
</dbReference>
<dbReference type="Gene3D" id="6.10.250.900">
    <property type="match status" value="1"/>
</dbReference>
<dbReference type="InterPro" id="IPR001955">
    <property type="entry name" value="Pancreatic_hormone-like"/>
</dbReference>
<dbReference type="InterPro" id="IPR020392">
    <property type="entry name" value="Pancreatic_hormone-like_CS"/>
</dbReference>
<dbReference type="PANTHER" id="PTHR10533">
    <property type="entry name" value="NEUROPEPTIDE Y/PANCREATIC HORMONE/PEPTIDE YY"/>
    <property type="match status" value="1"/>
</dbReference>
<dbReference type="PANTHER" id="PTHR10533:SF5">
    <property type="entry name" value="PRO-NEUROPEPTIDE Y"/>
    <property type="match status" value="1"/>
</dbReference>
<dbReference type="Pfam" id="PF00159">
    <property type="entry name" value="Hormone_3"/>
    <property type="match status" value="1"/>
</dbReference>
<dbReference type="PRINTS" id="PR00278">
    <property type="entry name" value="PANCHORMONE"/>
</dbReference>
<dbReference type="SMART" id="SM00309">
    <property type="entry name" value="PAH"/>
    <property type="match status" value="1"/>
</dbReference>
<dbReference type="PROSITE" id="PS00265">
    <property type="entry name" value="PANCREATIC_HORMONE_1"/>
    <property type="match status" value="1"/>
</dbReference>
<dbReference type="PROSITE" id="PS50276">
    <property type="entry name" value="PANCREATIC_HORMONE_2"/>
    <property type="match status" value="1"/>
</dbReference>
<protein>
    <recommendedName>
        <fullName>Pro-neuropeptide Y</fullName>
    </recommendedName>
    <component>
        <recommendedName>
            <fullName>Neuropeptide Y</fullName>
        </recommendedName>
        <alternativeName>
            <fullName>Neuropeptide tyrosine</fullName>
            <shortName>NPY</shortName>
        </alternativeName>
    </component>
    <component>
        <recommendedName>
            <fullName>C-flanking peptide of NPY</fullName>
            <shortName>CPON</shortName>
        </recommendedName>
    </component>
</protein>
<name>NPY_DANRE</name>